<name>RS12_GEOTN</name>
<protein>
    <recommendedName>
        <fullName evidence="2">Small ribosomal subunit protein uS12</fullName>
    </recommendedName>
    <alternativeName>
        <fullName evidence="4">30S ribosomal protein S12</fullName>
    </alternativeName>
</protein>
<sequence length="140" mass="15466">MPTINQLVRKGRQKKVFKSKSPALNKGYNSFKKEQTNVSSPQKRGVCTRVGTMTPKKPNSALRKYARVRLTNGIEVTAYIPGIGHNLQEHSVVLIRGGRVKDLPGVRYHIVRGALDTAGVANRMQGRSKYGAKKPKAAKK</sequence>
<reference key="1">
    <citation type="journal article" date="2007" name="Proc. Natl. Acad. Sci. U.S.A.">
        <title>Genome and proteome of long-chain alkane degrading Geobacillus thermodenitrificans NG80-2 isolated from a deep-subsurface oil reservoir.</title>
        <authorList>
            <person name="Feng L."/>
            <person name="Wang W."/>
            <person name="Cheng J."/>
            <person name="Ren Y."/>
            <person name="Zhao G."/>
            <person name="Gao C."/>
            <person name="Tang Y."/>
            <person name="Liu X."/>
            <person name="Han W."/>
            <person name="Peng X."/>
            <person name="Liu R."/>
            <person name="Wang L."/>
        </authorList>
    </citation>
    <scope>NUCLEOTIDE SEQUENCE [LARGE SCALE GENOMIC DNA]</scope>
    <source>
        <strain>NG80-2</strain>
    </source>
</reference>
<gene>
    <name evidence="2" type="primary">rpsL</name>
    <name type="ordered locus">GTNG_0101</name>
</gene>
<feature type="chain" id="PRO_0000295981" description="Small ribosomal subunit protein uS12">
    <location>
        <begin position="1"/>
        <end position="140"/>
    </location>
</feature>
<feature type="region of interest" description="Disordered" evidence="3">
    <location>
        <begin position="33"/>
        <end position="55"/>
    </location>
</feature>
<feature type="modified residue" description="3-methylthioaspartic acid" evidence="1">
    <location>
        <position position="102"/>
    </location>
</feature>
<evidence type="ECO:0000250" key="1"/>
<evidence type="ECO:0000255" key="2">
    <source>
        <dbReference type="HAMAP-Rule" id="MF_00403"/>
    </source>
</evidence>
<evidence type="ECO:0000256" key="3">
    <source>
        <dbReference type="SAM" id="MobiDB-lite"/>
    </source>
</evidence>
<evidence type="ECO:0000305" key="4"/>
<proteinExistence type="inferred from homology"/>
<organism>
    <name type="scientific">Geobacillus thermodenitrificans (strain NG80-2)</name>
    <dbReference type="NCBI Taxonomy" id="420246"/>
    <lineage>
        <taxon>Bacteria</taxon>
        <taxon>Bacillati</taxon>
        <taxon>Bacillota</taxon>
        <taxon>Bacilli</taxon>
        <taxon>Bacillales</taxon>
        <taxon>Anoxybacillaceae</taxon>
        <taxon>Geobacillus</taxon>
    </lineage>
</organism>
<keyword id="KW-0488">Methylation</keyword>
<keyword id="KW-0687">Ribonucleoprotein</keyword>
<keyword id="KW-0689">Ribosomal protein</keyword>
<keyword id="KW-0694">RNA-binding</keyword>
<keyword id="KW-0699">rRNA-binding</keyword>
<keyword id="KW-0820">tRNA-binding</keyword>
<accession>A4IJI4</accession>
<dbReference type="EMBL" id="CP000557">
    <property type="protein sequence ID" value="ABO65488.1"/>
    <property type="molecule type" value="Genomic_DNA"/>
</dbReference>
<dbReference type="RefSeq" id="WP_008881949.1">
    <property type="nucleotide sequence ID" value="NC_009328.1"/>
</dbReference>
<dbReference type="SMR" id="A4IJI4"/>
<dbReference type="GeneID" id="87622331"/>
<dbReference type="KEGG" id="gtn:GTNG_0101"/>
<dbReference type="eggNOG" id="COG0048">
    <property type="taxonomic scope" value="Bacteria"/>
</dbReference>
<dbReference type="HOGENOM" id="CLU_104295_1_2_9"/>
<dbReference type="Proteomes" id="UP000001578">
    <property type="component" value="Chromosome"/>
</dbReference>
<dbReference type="GO" id="GO:0015935">
    <property type="term" value="C:small ribosomal subunit"/>
    <property type="evidence" value="ECO:0007669"/>
    <property type="project" value="InterPro"/>
</dbReference>
<dbReference type="GO" id="GO:0019843">
    <property type="term" value="F:rRNA binding"/>
    <property type="evidence" value="ECO:0007669"/>
    <property type="project" value="UniProtKB-UniRule"/>
</dbReference>
<dbReference type="GO" id="GO:0003735">
    <property type="term" value="F:structural constituent of ribosome"/>
    <property type="evidence" value="ECO:0007669"/>
    <property type="project" value="InterPro"/>
</dbReference>
<dbReference type="GO" id="GO:0000049">
    <property type="term" value="F:tRNA binding"/>
    <property type="evidence" value="ECO:0007669"/>
    <property type="project" value="UniProtKB-UniRule"/>
</dbReference>
<dbReference type="GO" id="GO:0006412">
    <property type="term" value="P:translation"/>
    <property type="evidence" value="ECO:0007669"/>
    <property type="project" value="UniProtKB-UniRule"/>
</dbReference>
<dbReference type="CDD" id="cd03368">
    <property type="entry name" value="Ribosomal_S12"/>
    <property type="match status" value="1"/>
</dbReference>
<dbReference type="FunFam" id="2.40.50.140:FF:000001">
    <property type="entry name" value="30S ribosomal protein S12"/>
    <property type="match status" value="1"/>
</dbReference>
<dbReference type="Gene3D" id="2.40.50.140">
    <property type="entry name" value="Nucleic acid-binding proteins"/>
    <property type="match status" value="1"/>
</dbReference>
<dbReference type="HAMAP" id="MF_00403_B">
    <property type="entry name" value="Ribosomal_uS12_B"/>
    <property type="match status" value="1"/>
</dbReference>
<dbReference type="InterPro" id="IPR012340">
    <property type="entry name" value="NA-bd_OB-fold"/>
</dbReference>
<dbReference type="InterPro" id="IPR006032">
    <property type="entry name" value="Ribosomal_uS12"/>
</dbReference>
<dbReference type="InterPro" id="IPR005679">
    <property type="entry name" value="Ribosomal_uS12_bac"/>
</dbReference>
<dbReference type="NCBIfam" id="TIGR00981">
    <property type="entry name" value="rpsL_bact"/>
    <property type="match status" value="1"/>
</dbReference>
<dbReference type="PANTHER" id="PTHR11652">
    <property type="entry name" value="30S RIBOSOMAL PROTEIN S12 FAMILY MEMBER"/>
    <property type="match status" value="1"/>
</dbReference>
<dbReference type="Pfam" id="PF00164">
    <property type="entry name" value="Ribosom_S12_S23"/>
    <property type="match status" value="1"/>
</dbReference>
<dbReference type="PIRSF" id="PIRSF002133">
    <property type="entry name" value="Ribosomal_S12/S23"/>
    <property type="match status" value="1"/>
</dbReference>
<dbReference type="PRINTS" id="PR01034">
    <property type="entry name" value="RIBOSOMALS12"/>
</dbReference>
<dbReference type="SUPFAM" id="SSF50249">
    <property type="entry name" value="Nucleic acid-binding proteins"/>
    <property type="match status" value="1"/>
</dbReference>
<dbReference type="PROSITE" id="PS00055">
    <property type="entry name" value="RIBOSOMAL_S12"/>
    <property type="match status" value="1"/>
</dbReference>
<comment type="function">
    <text evidence="2">With S4 and S5 plays an important role in translational accuracy.</text>
</comment>
<comment type="function">
    <text evidence="2">Interacts with and stabilizes bases of the 16S rRNA that are involved in tRNA selection in the A site and with the mRNA backbone. Located at the interface of the 30S and 50S subunits, it traverses the body of the 30S subunit contacting proteins on the other side and probably holding the rRNA structure together. The combined cluster of proteins S8, S12 and S17 appears to hold together the shoulder and platform of the 30S subunit.</text>
</comment>
<comment type="subunit">
    <text evidence="2">Part of the 30S ribosomal subunit. Contacts proteins S8 and S17. May interact with IF1 in the 30S initiation complex.</text>
</comment>
<comment type="similarity">
    <text evidence="2">Belongs to the universal ribosomal protein uS12 family.</text>
</comment>